<organism>
    <name type="scientific">Caenorhabditis elegans</name>
    <dbReference type="NCBI Taxonomy" id="6239"/>
    <lineage>
        <taxon>Eukaryota</taxon>
        <taxon>Metazoa</taxon>
        <taxon>Ecdysozoa</taxon>
        <taxon>Nematoda</taxon>
        <taxon>Chromadorea</taxon>
        <taxon>Rhabditida</taxon>
        <taxon>Rhabditina</taxon>
        <taxon>Rhabditomorpha</taxon>
        <taxon>Rhabditoidea</taxon>
        <taxon>Rhabditidae</taxon>
        <taxon>Peloderinae</taxon>
        <taxon>Caenorhabditis</taxon>
    </lineage>
</organism>
<keyword id="KW-0472">Membrane</keyword>
<keyword id="KW-1185">Reference proteome</keyword>
<keyword id="KW-0812">Transmembrane</keyword>
<keyword id="KW-1133">Transmembrane helix</keyword>
<protein>
    <recommendedName>
        <fullName>Serpentine receptor class epsilon-1</fullName>
        <shortName>Protein sre-1</shortName>
    </recommendedName>
</protein>
<reference key="1">
    <citation type="journal article" date="1998" name="Science">
        <title>Genome sequence of the nematode C. elegans: a platform for investigating biology.</title>
        <authorList>
            <consortium name="The C. elegans sequencing consortium"/>
        </authorList>
    </citation>
    <scope>NUCLEOTIDE SEQUENCE [LARGE SCALE GENOMIC DNA]</scope>
    <source>
        <strain>Bristol N2</strain>
    </source>
</reference>
<name>SRE1_CAEEL</name>
<proteinExistence type="inferred from homology"/>
<feature type="chain" id="PRO_0000104534" description="Serpentine receptor class epsilon-1">
    <location>
        <begin position="1"/>
        <end position="355"/>
    </location>
</feature>
<feature type="transmembrane region" description="Helical" evidence="1">
    <location>
        <begin position="28"/>
        <end position="48"/>
    </location>
</feature>
<feature type="transmembrane region" description="Helical" evidence="1">
    <location>
        <begin position="56"/>
        <end position="76"/>
    </location>
</feature>
<feature type="transmembrane region" description="Helical" evidence="1">
    <location>
        <begin position="102"/>
        <end position="122"/>
    </location>
</feature>
<feature type="transmembrane region" description="Helical" evidence="1">
    <location>
        <begin position="144"/>
        <end position="164"/>
    </location>
</feature>
<feature type="transmembrane region" description="Helical" evidence="1">
    <location>
        <begin position="172"/>
        <end position="192"/>
    </location>
</feature>
<feature type="transmembrane region" description="Helical" evidence="1">
    <location>
        <begin position="232"/>
        <end position="252"/>
    </location>
</feature>
<feature type="transmembrane region" description="Helical" evidence="1">
    <location>
        <begin position="268"/>
        <end position="288"/>
    </location>
</feature>
<gene>
    <name type="primary">sre-1</name>
    <name type="ORF">B0495.1</name>
</gene>
<dbReference type="EMBL" id="FO080132">
    <property type="protein sequence ID" value="CCD61470.1"/>
    <property type="molecule type" value="Genomic_DNA"/>
</dbReference>
<dbReference type="RefSeq" id="NP_495621.2">
    <property type="nucleotide sequence ID" value="NM_063220.4"/>
</dbReference>
<dbReference type="FunCoup" id="Q09213">
    <property type="interactions" value="157"/>
</dbReference>
<dbReference type="STRING" id="6239.B0495.1.1"/>
<dbReference type="PaxDb" id="6239-B0495.1"/>
<dbReference type="EnsemblMetazoa" id="B0495.1.1">
    <property type="protein sequence ID" value="B0495.1.1"/>
    <property type="gene ID" value="WBGene00005149"/>
</dbReference>
<dbReference type="GeneID" id="191827"/>
<dbReference type="KEGG" id="cel:CELE_B0495.1"/>
<dbReference type="UCSC" id="B0495.1">
    <property type="organism name" value="c. elegans"/>
</dbReference>
<dbReference type="AGR" id="WB:WBGene00005149"/>
<dbReference type="CTD" id="191827"/>
<dbReference type="WormBase" id="B0495.1">
    <property type="protein sequence ID" value="CE01759"/>
    <property type="gene ID" value="WBGene00005149"/>
    <property type="gene designation" value="sre-1"/>
</dbReference>
<dbReference type="eggNOG" id="ENOG502TH2V">
    <property type="taxonomic scope" value="Eukaryota"/>
</dbReference>
<dbReference type="GeneTree" id="ENSGT00970000197419"/>
<dbReference type="HOGENOM" id="CLU_795071_0_0_1"/>
<dbReference type="InParanoid" id="Q09213"/>
<dbReference type="OMA" id="VGRFITC"/>
<dbReference type="OrthoDB" id="5877454at2759"/>
<dbReference type="PhylomeDB" id="Q09213"/>
<dbReference type="PRO" id="PR:Q09213"/>
<dbReference type="Proteomes" id="UP000001940">
    <property type="component" value="Chromosome II"/>
</dbReference>
<dbReference type="Bgee" id="WBGene00005149">
    <property type="expression patterns" value="Expressed in larva"/>
</dbReference>
<dbReference type="GO" id="GO:0016020">
    <property type="term" value="C:membrane"/>
    <property type="evidence" value="ECO:0007669"/>
    <property type="project" value="UniProtKB-SubCell"/>
</dbReference>
<dbReference type="GO" id="GO:0007606">
    <property type="term" value="P:sensory perception of chemical stimulus"/>
    <property type="evidence" value="ECO:0007669"/>
    <property type="project" value="InterPro"/>
</dbReference>
<dbReference type="InterPro" id="IPR004151">
    <property type="entry name" value="7TM_GPCR_serpentine_rcpt_Sre"/>
</dbReference>
<dbReference type="PANTHER" id="PTHR23128:SF139">
    <property type="entry name" value="SERPENTINE RECEPTOR CLASS EPSILON-1-RELATED"/>
    <property type="match status" value="1"/>
</dbReference>
<dbReference type="PANTHER" id="PTHR23128">
    <property type="entry name" value="SERPENTINE RECEPTOR, CLASS E (EPSILON)-RELATED"/>
    <property type="match status" value="1"/>
</dbReference>
<dbReference type="Pfam" id="PF03125">
    <property type="entry name" value="Sre"/>
    <property type="match status" value="1"/>
</dbReference>
<evidence type="ECO:0000255" key="1"/>
<evidence type="ECO:0000305" key="2"/>
<accession>Q09213</accession>
<sequence length="355" mass="41838">MNLQYSPVFKCPPEMVTHCQWIYWFTHFELLAMIIEIPSFLLVIYATIKSPFHYNLNFIGLFMLLGYYVFLVGRFITCLYEIGSLTVKDEDAENEIYPMPLILSSILQFFYMGCACGISLAVAFERFFATYFVETYEKKKRKWISLFLCSEFTVACGVSAIVMLYDLLPFAVMAFLGVFISCASFLFYLVLFYMNKRRLHTIQQDRDNDVYTLSVRFQLSENLKVMTLLRNVVLFSGVNNFVMAIILTMYMSKSFKVSYPLATLYLHFAFNCCVLLYSFLMLIIIIFSVKQYRMYYFSIRFVRVVLYPLVGRCFQNEFSQSPVQQLTIRDETESYFVNLSSQWDEKFQKINRLSI</sequence>
<comment type="subcellular location">
    <subcellularLocation>
        <location evidence="2">Membrane</location>
        <topology evidence="2">Multi-pass membrane protein</topology>
    </subcellularLocation>
</comment>
<comment type="similarity">
    <text evidence="2">Belongs to the nematode receptor-like protein sre family.</text>
</comment>